<evidence type="ECO:0000255" key="1">
    <source>
        <dbReference type="HAMAP-Rule" id="MF_01454"/>
    </source>
</evidence>
<evidence type="ECO:0000255" key="2">
    <source>
        <dbReference type="PROSITE-ProRule" id="PRU01231"/>
    </source>
</evidence>
<keyword id="KW-0963">Cytoplasm</keyword>
<keyword id="KW-0342">GTP-binding</keyword>
<keyword id="KW-0378">Hydrolase</keyword>
<keyword id="KW-0460">Magnesium</keyword>
<keyword id="KW-0479">Metal-binding</keyword>
<keyword id="KW-0547">Nucleotide-binding</keyword>
<sequence>MQFIDQAQIEVEAGKGGDGIVAFRREKYVPAGGPSGGNGGRGGSVVFVAVENLQTLLDFRYKHIFKADDGGRGGPNNCTGASGKDLIVQVPCGTTIYDAETGDLLGDLTQPNQQLLIAAGGKGGLGNQYFLSNRNRAPEYSLPGLPGERKLLRLELKLLAEVGIIGLPNAGKSTLISSLSAARPKIADYPFTTLIPNLGVVRKPTGDGTVFADIPGLIEGAADGAGLGHDFLRHIERTRVLLHLIDATSDDVIRDYNTIEQELQAYGRGLSERMQIVALNKIDAVDRETVDLDALATQLNHLSHAPVFLISAVTRTGLEPMLQEVWGILDQVNALEEAEVFR</sequence>
<protein>
    <recommendedName>
        <fullName evidence="1">GTPase Obg</fullName>
        <ecNumber evidence="1">3.6.5.-</ecNumber>
    </recommendedName>
    <alternativeName>
        <fullName evidence="1">GTP-binding protein Obg</fullName>
    </alternativeName>
</protein>
<proteinExistence type="inferred from homology"/>
<dbReference type="EC" id="3.6.5.-" evidence="1"/>
<dbReference type="EMBL" id="CP000117">
    <property type="protein sequence ID" value="ABA21209.1"/>
    <property type="molecule type" value="Genomic_DNA"/>
</dbReference>
<dbReference type="SMR" id="Q3MCS7"/>
<dbReference type="STRING" id="240292.Ava_1586"/>
<dbReference type="KEGG" id="ava:Ava_1586"/>
<dbReference type="eggNOG" id="COG0536">
    <property type="taxonomic scope" value="Bacteria"/>
</dbReference>
<dbReference type="HOGENOM" id="CLU_011747_2_0_3"/>
<dbReference type="Proteomes" id="UP000002533">
    <property type="component" value="Chromosome"/>
</dbReference>
<dbReference type="GO" id="GO:0005737">
    <property type="term" value="C:cytoplasm"/>
    <property type="evidence" value="ECO:0007669"/>
    <property type="project" value="UniProtKB-SubCell"/>
</dbReference>
<dbReference type="GO" id="GO:0005525">
    <property type="term" value="F:GTP binding"/>
    <property type="evidence" value="ECO:0007669"/>
    <property type="project" value="UniProtKB-UniRule"/>
</dbReference>
<dbReference type="GO" id="GO:0003924">
    <property type="term" value="F:GTPase activity"/>
    <property type="evidence" value="ECO:0007669"/>
    <property type="project" value="UniProtKB-UniRule"/>
</dbReference>
<dbReference type="GO" id="GO:0000287">
    <property type="term" value="F:magnesium ion binding"/>
    <property type="evidence" value="ECO:0007669"/>
    <property type="project" value="InterPro"/>
</dbReference>
<dbReference type="GO" id="GO:0042254">
    <property type="term" value="P:ribosome biogenesis"/>
    <property type="evidence" value="ECO:0007669"/>
    <property type="project" value="UniProtKB-UniRule"/>
</dbReference>
<dbReference type="CDD" id="cd01898">
    <property type="entry name" value="Obg"/>
    <property type="match status" value="1"/>
</dbReference>
<dbReference type="FunFam" id="2.70.210.12:FF:000001">
    <property type="entry name" value="GTPase Obg"/>
    <property type="match status" value="1"/>
</dbReference>
<dbReference type="Gene3D" id="2.70.210.12">
    <property type="entry name" value="GTP1/OBG domain"/>
    <property type="match status" value="1"/>
</dbReference>
<dbReference type="Gene3D" id="3.40.50.300">
    <property type="entry name" value="P-loop containing nucleotide triphosphate hydrolases"/>
    <property type="match status" value="1"/>
</dbReference>
<dbReference type="HAMAP" id="MF_01454">
    <property type="entry name" value="GTPase_Obg"/>
    <property type="match status" value="1"/>
</dbReference>
<dbReference type="InterPro" id="IPR031167">
    <property type="entry name" value="G_OBG"/>
</dbReference>
<dbReference type="InterPro" id="IPR006073">
    <property type="entry name" value="GTP-bd"/>
</dbReference>
<dbReference type="InterPro" id="IPR014100">
    <property type="entry name" value="GTP-bd_Obg/CgtA"/>
</dbReference>
<dbReference type="InterPro" id="IPR006074">
    <property type="entry name" value="GTP1-OBG_CS"/>
</dbReference>
<dbReference type="InterPro" id="IPR006169">
    <property type="entry name" value="GTP1_OBG_dom"/>
</dbReference>
<dbReference type="InterPro" id="IPR036726">
    <property type="entry name" value="GTP1_OBG_dom_sf"/>
</dbReference>
<dbReference type="InterPro" id="IPR045086">
    <property type="entry name" value="OBG_GTPase"/>
</dbReference>
<dbReference type="InterPro" id="IPR027417">
    <property type="entry name" value="P-loop_NTPase"/>
</dbReference>
<dbReference type="InterPro" id="IPR005225">
    <property type="entry name" value="Small_GTP-bd"/>
</dbReference>
<dbReference type="NCBIfam" id="TIGR02729">
    <property type="entry name" value="Obg_CgtA"/>
    <property type="match status" value="1"/>
</dbReference>
<dbReference type="NCBIfam" id="NF008955">
    <property type="entry name" value="PRK12297.1"/>
    <property type="match status" value="1"/>
</dbReference>
<dbReference type="NCBIfam" id="NF008956">
    <property type="entry name" value="PRK12299.1"/>
    <property type="match status" value="1"/>
</dbReference>
<dbReference type="NCBIfam" id="TIGR00231">
    <property type="entry name" value="small_GTP"/>
    <property type="match status" value="1"/>
</dbReference>
<dbReference type="PANTHER" id="PTHR11702">
    <property type="entry name" value="DEVELOPMENTALLY REGULATED GTP-BINDING PROTEIN-RELATED"/>
    <property type="match status" value="1"/>
</dbReference>
<dbReference type="PANTHER" id="PTHR11702:SF31">
    <property type="entry name" value="MITOCHONDRIAL RIBOSOME-ASSOCIATED GTPASE 2"/>
    <property type="match status" value="1"/>
</dbReference>
<dbReference type="Pfam" id="PF01018">
    <property type="entry name" value="GTP1_OBG"/>
    <property type="match status" value="1"/>
</dbReference>
<dbReference type="Pfam" id="PF01926">
    <property type="entry name" value="MMR_HSR1"/>
    <property type="match status" value="1"/>
</dbReference>
<dbReference type="PIRSF" id="PIRSF002401">
    <property type="entry name" value="GTP_bd_Obg/CgtA"/>
    <property type="match status" value="1"/>
</dbReference>
<dbReference type="PRINTS" id="PR00326">
    <property type="entry name" value="GTP1OBG"/>
</dbReference>
<dbReference type="SUPFAM" id="SSF82051">
    <property type="entry name" value="Obg GTP-binding protein N-terminal domain"/>
    <property type="match status" value="1"/>
</dbReference>
<dbReference type="SUPFAM" id="SSF52540">
    <property type="entry name" value="P-loop containing nucleoside triphosphate hydrolases"/>
    <property type="match status" value="1"/>
</dbReference>
<dbReference type="PROSITE" id="PS51710">
    <property type="entry name" value="G_OBG"/>
    <property type="match status" value="1"/>
</dbReference>
<dbReference type="PROSITE" id="PS00905">
    <property type="entry name" value="GTP1_OBG"/>
    <property type="match status" value="1"/>
</dbReference>
<dbReference type="PROSITE" id="PS51883">
    <property type="entry name" value="OBG"/>
    <property type="match status" value="1"/>
</dbReference>
<comment type="function">
    <text evidence="1">An essential GTPase which binds GTP, GDP and possibly (p)ppGpp with moderate affinity, with high nucleotide exchange rates and a fairly low GTP hydrolysis rate. Plays a role in control of the cell cycle, stress response, ribosome biogenesis and in those bacteria that undergo differentiation, in morphogenesis control.</text>
</comment>
<comment type="cofactor">
    <cofactor evidence="1">
        <name>Mg(2+)</name>
        <dbReference type="ChEBI" id="CHEBI:18420"/>
    </cofactor>
</comment>
<comment type="subunit">
    <text evidence="1">Monomer.</text>
</comment>
<comment type="subcellular location">
    <subcellularLocation>
        <location evidence="1">Cytoplasm</location>
    </subcellularLocation>
</comment>
<comment type="similarity">
    <text evidence="1">Belongs to the TRAFAC class OBG-HflX-like GTPase superfamily. OBG GTPase family.</text>
</comment>
<feature type="chain" id="PRO_0000385690" description="GTPase Obg">
    <location>
        <begin position="1"/>
        <end position="342"/>
    </location>
</feature>
<feature type="domain" description="Obg" evidence="2">
    <location>
        <begin position="1"/>
        <end position="159"/>
    </location>
</feature>
<feature type="domain" description="OBG-type G" evidence="1">
    <location>
        <begin position="160"/>
        <end position="330"/>
    </location>
</feature>
<feature type="binding site" evidence="1">
    <location>
        <begin position="166"/>
        <end position="173"/>
    </location>
    <ligand>
        <name>GTP</name>
        <dbReference type="ChEBI" id="CHEBI:37565"/>
    </ligand>
</feature>
<feature type="binding site" evidence="1">
    <location>
        <position position="173"/>
    </location>
    <ligand>
        <name>Mg(2+)</name>
        <dbReference type="ChEBI" id="CHEBI:18420"/>
    </ligand>
</feature>
<feature type="binding site" evidence="1">
    <location>
        <begin position="191"/>
        <end position="195"/>
    </location>
    <ligand>
        <name>GTP</name>
        <dbReference type="ChEBI" id="CHEBI:37565"/>
    </ligand>
</feature>
<feature type="binding site" evidence="1">
    <location>
        <position position="193"/>
    </location>
    <ligand>
        <name>Mg(2+)</name>
        <dbReference type="ChEBI" id="CHEBI:18420"/>
    </ligand>
</feature>
<feature type="binding site" evidence="1">
    <location>
        <begin position="213"/>
        <end position="216"/>
    </location>
    <ligand>
        <name>GTP</name>
        <dbReference type="ChEBI" id="CHEBI:37565"/>
    </ligand>
</feature>
<feature type="binding site" evidence="1">
    <location>
        <begin position="280"/>
        <end position="283"/>
    </location>
    <ligand>
        <name>GTP</name>
        <dbReference type="ChEBI" id="CHEBI:37565"/>
    </ligand>
</feature>
<feature type="binding site" evidence="1">
    <location>
        <begin position="311"/>
        <end position="313"/>
    </location>
    <ligand>
        <name>GTP</name>
        <dbReference type="ChEBI" id="CHEBI:37565"/>
    </ligand>
</feature>
<name>OBG_TRIV2</name>
<accession>Q3MCS7</accession>
<reference key="1">
    <citation type="journal article" date="2014" name="Stand. Genomic Sci.">
        <title>Complete genome sequence of Anabaena variabilis ATCC 29413.</title>
        <authorList>
            <person name="Thiel T."/>
            <person name="Pratte B.S."/>
            <person name="Zhong J."/>
            <person name="Goodwin L."/>
            <person name="Copeland A."/>
            <person name="Lucas S."/>
            <person name="Han C."/>
            <person name="Pitluck S."/>
            <person name="Land M.L."/>
            <person name="Kyrpides N.C."/>
            <person name="Woyke T."/>
        </authorList>
    </citation>
    <scope>NUCLEOTIDE SEQUENCE [LARGE SCALE GENOMIC DNA]</scope>
    <source>
        <strain>ATCC 29413 / PCC 7937</strain>
    </source>
</reference>
<organism>
    <name type="scientific">Trichormus variabilis (strain ATCC 29413 / PCC 7937)</name>
    <name type="common">Anabaena variabilis</name>
    <dbReference type="NCBI Taxonomy" id="240292"/>
    <lineage>
        <taxon>Bacteria</taxon>
        <taxon>Bacillati</taxon>
        <taxon>Cyanobacteriota</taxon>
        <taxon>Cyanophyceae</taxon>
        <taxon>Nostocales</taxon>
        <taxon>Nostocaceae</taxon>
        <taxon>Trichormus</taxon>
    </lineage>
</organism>
<gene>
    <name evidence="1" type="primary">obg</name>
    <name type="ordered locus">Ava_1586</name>
</gene>